<reference key="1">
    <citation type="journal article" date="1996" name="J. Clin. Microbiol.">
        <title>Human papillomavirus type 70 genome cloned from overlapping PCR products: complete nucleotide sequence and genomic organization.</title>
        <authorList>
            <person name="Forslund O."/>
            <person name="Hansson B.G."/>
        </authorList>
    </citation>
    <scope>NUCLEOTIDE SEQUENCE [GENOMIC DNA]</scope>
</reference>
<protein>
    <recommendedName>
        <fullName evidence="1">Replication protein E1</fullName>
        <ecNumber evidence="1">5.6.2.4</ecNumber>
    </recommendedName>
    <alternativeName>
        <fullName evidence="1">ATP-dependent helicase E1</fullName>
    </alternativeName>
    <alternativeName>
        <fullName evidence="1">DNA 3'-5' helicase E1</fullName>
    </alternativeName>
</protein>
<feature type="chain" id="PRO_0000133159" description="Replication protein E1">
    <location>
        <begin position="1"/>
        <end position="652"/>
    </location>
</feature>
<feature type="domain" description="SF3 helicase" evidence="1">
    <location>
        <begin position="453"/>
        <end position="603"/>
    </location>
</feature>
<feature type="region of interest" description="Disordered" evidence="2">
    <location>
        <begin position="153"/>
        <end position="173"/>
    </location>
</feature>
<feature type="region of interest" description="DNA-binding region" evidence="1">
    <location>
        <begin position="188"/>
        <end position="354"/>
    </location>
</feature>
<feature type="short sequence motif" description="Nuclear localization signal" evidence="1">
    <location>
        <begin position="86"/>
        <end position="88"/>
    </location>
</feature>
<feature type="binding site" evidence="1">
    <location>
        <begin position="479"/>
        <end position="486"/>
    </location>
    <ligand>
        <name>ATP</name>
        <dbReference type="ChEBI" id="CHEBI:30616"/>
    </ligand>
</feature>
<feature type="modified residue" description="Phosphoserine; by host" evidence="1">
    <location>
        <position position="92"/>
    </location>
</feature>
<feature type="cross-link" description="Glycyl lysine isopeptide (Lys-Gly) (interchain with G-Cter in SUMO)" evidence="1">
    <location>
        <position position="560"/>
    </location>
</feature>
<comment type="function">
    <text evidence="1">ATP-dependent DNA 3'-5' helicase required for initiation of viral DNA replication. It forms a complex with the viral E2 protein. The E1-E2 complex binds to the replication origin which contains binding sites for both proteins. During the initial step, a dimer of E1 interacts with a dimer of protein E2 leading to a complex that binds the viral origin of replication with high specificity. Then, a second dimer of E1 displaces the E2 dimer in an ATP-dependent manner to form the E1 tetramer. Following this, two E1 monomers are added to each half of the site, which results in the formation of two E1 trimers on the viral ori. Subsequently, two hexamers will be created. The double hexamer acts as a bi-directional helicase machinery and unwinds the viral DNA and then recruits the host DNA polymerase to start replication.</text>
</comment>
<comment type="catalytic activity">
    <reaction evidence="1">
        <text>Couples ATP hydrolysis with the unwinding of duplex DNA by translocating in the 3'-5' direction.</text>
        <dbReference type="EC" id="5.6.2.4"/>
    </reaction>
</comment>
<comment type="catalytic activity">
    <reaction evidence="1">
        <text>ATP + H2O = ADP + phosphate + H(+)</text>
        <dbReference type="Rhea" id="RHEA:13065"/>
        <dbReference type="ChEBI" id="CHEBI:15377"/>
        <dbReference type="ChEBI" id="CHEBI:15378"/>
        <dbReference type="ChEBI" id="CHEBI:30616"/>
        <dbReference type="ChEBI" id="CHEBI:43474"/>
        <dbReference type="ChEBI" id="CHEBI:456216"/>
        <dbReference type="EC" id="5.6.2.4"/>
    </reaction>
</comment>
<comment type="subunit">
    <text evidence="1">Can form hexamers. Interacts with E2 protein; this interaction increases E1 DNA binding specificity. Interacts with host DNA polymerase subunit POLA2. Interacts with host single stranded DNA-binding protein RPA1. Interacts with host TOP1; this interaction stimulates the enzymatic activity of TOP1.</text>
</comment>
<comment type="subcellular location">
    <subcellularLocation>
        <location evidence="1">Host nucleus</location>
    </subcellularLocation>
</comment>
<comment type="PTM">
    <text evidence="1">Phosphorylated.</text>
</comment>
<comment type="PTM">
    <text evidence="1">Sumoylated.</text>
</comment>
<comment type="similarity">
    <text evidence="1">Belongs to the papillomaviridae E1 protein family.</text>
</comment>
<evidence type="ECO:0000255" key="1">
    <source>
        <dbReference type="HAMAP-Rule" id="MF_04000"/>
    </source>
</evidence>
<evidence type="ECO:0000256" key="2">
    <source>
        <dbReference type="SAM" id="MobiDB-lite"/>
    </source>
</evidence>
<sequence length="652" mass="73256">MANCEGTDGDGSGCNGWFLVQAIVDKQTGDTVSEDEDENATDTGSDLADFIDDTTDICVQAERETAQVLYNMQEAQRDAQSVRALKRKYGGSNLNKSPCAKPPGVHREQRVTLQELPVNICNKQARTNVYSVPDSGYGNMEVETAEVEVTVVNNTNGEEEGENGGENGGSIREECSSVDSAIDSENQDPQSPTAQLKTVLQANNQKAILLSQFKHTYGLAFNDLVRTFKSDKTICTDWVAAICGVNPTIAEGFKTLIQPYALYTHIQCLDTKYGVYILLLIRYKCGKNRITVGKGLSKLLHVPESCMLIEPPKLRSPVAALYWYRTGMSNISEVSGTTPEWIQRLTVIQHGIDDSVFDLSDMVQWAFDNDVTEDSDIAYGYALLADSNSNAAAFLKSNCQAKYVRDCATMCRHYKRAQKKQMTMAQWIRFRCDKCDDGGDWRPIVQFLRYQGVEFITFLCAFKEFLKGTPKKNCIVIQGPPNTGKSYFCMSLMHFLQGTVISYVNSTSHFWLEPLADAKVAMLDDATGTCWSYFDTYMRNALDGNPISLDRKHRHLIQIKCPPILITSNTNPVEENRWPYLTSRLTVFTFPNAFPFDQNRNPVYTINNKNWKSFFQKTWCKLDLQQDEDEGDNDGNTIPTFKCVTGENTRTL</sequence>
<accession>P50765</accession>
<organism>
    <name type="scientific">Human papillomavirus type 70</name>
    <dbReference type="NCBI Taxonomy" id="39457"/>
    <lineage>
        <taxon>Viruses</taxon>
        <taxon>Monodnaviria</taxon>
        <taxon>Shotokuvirae</taxon>
        <taxon>Cossaviricota</taxon>
        <taxon>Papovaviricetes</taxon>
        <taxon>Zurhausenvirales</taxon>
        <taxon>Papillomaviridae</taxon>
        <taxon>Firstpapillomavirinae</taxon>
        <taxon>Alphapapillomavirus</taxon>
        <taxon>Alphapapillomavirus 7</taxon>
    </lineage>
</organism>
<keyword id="KW-0067">ATP-binding</keyword>
<keyword id="KW-0235">DNA replication</keyword>
<keyword id="KW-0238">DNA-binding</keyword>
<keyword id="KW-0244">Early protein</keyword>
<keyword id="KW-0347">Helicase</keyword>
<keyword id="KW-1048">Host nucleus</keyword>
<keyword id="KW-0378">Hydrolase</keyword>
<keyword id="KW-0413">Isomerase</keyword>
<keyword id="KW-1017">Isopeptide bond</keyword>
<keyword id="KW-0547">Nucleotide-binding</keyword>
<keyword id="KW-0597">Phosphoprotein</keyword>
<keyword id="KW-1185">Reference proteome</keyword>
<keyword id="KW-0832">Ubl conjugation</keyword>
<name>VE1_HPV70</name>
<dbReference type="EC" id="5.6.2.4" evidence="1"/>
<dbReference type="EMBL" id="U21941">
    <property type="protein sequence ID" value="AAC54852.1"/>
    <property type="molecule type" value="Genomic_DNA"/>
</dbReference>
<dbReference type="SMR" id="P50765"/>
<dbReference type="Proteomes" id="UP000007677">
    <property type="component" value="Segment"/>
</dbReference>
<dbReference type="GO" id="GO:0042025">
    <property type="term" value="C:host cell nucleus"/>
    <property type="evidence" value="ECO:0007669"/>
    <property type="project" value="UniProtKB-SubCell"/>
</dbReference>
<dbReference type="GO" id="GO:0005524">
    <property type="term" value="F:ATP binding"/>
    <property type="evidence" value="ECO:0007669"/>
    <property type="project" value="UniProtKB-UniRule"/>
</dbReference>
<dbReference type="GO" id="GO:0016887">
    <property type="term" value="F:ATP hydrolysis activity"/>
    <property type="evidence" value="ECO:0007669"/>
    <property type="project" value="RHEA"/>
</dbReference>
<dbReference type="GO" id="GO:0003677">
    <property type="term" value="F:DNA binding"/>
    <property type="evidence" value="ECO:0007669"/>
    <property type="project" value="UniProtKB-UniRule"/>
</dbReference>
<dbReference type="GO" id="GO:0003678">
    <property type="term" value="F:DNA helicase activity"/>
    <property type="evidence" value="ECO:0007669"/>
    <property type="project" value="UniProtKB-UniRule"/>
</dbReference>
<dbReference type="GO" id="GO:0006260">
    <property type="term" value="P:DNA replication"/>
    <property type="evidence" value="ECO:0007669"/>
    <property type="project" value="UniProtKB-UniRule"/>
</dbReference>
<dbReference type="Gene3D" id="3.40.1310.10">
    <property type="match status" value="1"/>
</dbReference>
<dbReference type="Gene3D" id="3.40.50.300">
    <property type="entry name" value="P-loop containing nucleotide triphosphate hydrolases"/>
    <property type="match status" value="1"/>
</dbReference>
<dbReference type="Gene3D" id="1.10.10.510">
    <property type="entry name" value="Zinc finger, large T-antigen D1 domain"/>
    <property type="match status" value="1"/>
</dbReference>
<dbReference type="HAMAP" id="MF_04000">
    <property type="entry name" value="PPV_E1"/>
    <property type="match status" value="1"/>
</dbReference>
<dbReference type="InterPro" id="IPR014015">
    <property type="entry name" value="Helicase_SF3_DNA-vir"/>
</dbReference>
<dbReference type="InterPro" id="IPR027417">
    <property type="entry name" value="P-loop_NTPase"/>
</dbReference>
<dbReference type="InterPro" id="IPR001177">
    <property type="entry name" value="PPV_DNA_helicase_E1_C"/>
</dbReference>
<dbReference type="InterPro" id="IPR014000">
    <property type="entry name" value="PPV_DNA_helicase_E1_N"/>
</dbReference>
<dbReference type="InterPro" id="IPR046832">
    <property type="entry name" value="PPV_E1_DBD"/>
</dbReference>
<dbReference type="InterPro" id="IPR046935">
    <property type="entry name" value="PPV_E1_DBD_sf"/>
</dbReference>
<dbReference type="InterPro" id="IPR016393">
    <property type="entry name" value="Rep_E1_papillomaV"/>
</dbReference>
<dbReference type="InterPro" id="IPR037102">
    <property type="entry name" value="Znf_lg_T-Ag_D1_dom_sf"/>
</dbReference>
<dbReference type="Pfam" id="PF00519">
    <property type="entry name" value="PPV_E1_C"/>
    <property type="match status" value="1"/>
</dbReference>
<dbReference type="Pfam" id="PF20450">
    <property type="entry name" value="PPV_E1_DBD"/>
    <property type="match status" value="1"/>
</dbReference>
<dbReference type="Pfam" id="PF00524">
    <property type="entry name" value="PPV_E1_N"/>
    <property type="match status" value="1"/>
</dbReference>
<dbReference type="PIRSF" id="PIRSF003383">
    <property type="entry name" value="Rep_E1_papillomaV"/>
    <property type="match status" value="1"/>
</dbReference>
<dbReference type="SUPFAM" id="SSF55464">
    <property type="entry name" value="Origin of replication-binding domain, RBD-like"/>
    <property type="match status" value="1"/>
</dbReference>
<dbReference type="SUPFAM" id="SSF52540">
    <property type="entry name" value="P-loop containing nucleoside triphosphate hydrolases"/>
    <property type="match status" value="1"/>
</dbReference>
<dbReference type="PROSITE" id="PS51206">
    <property type="entry name" value="SF3_HELICASE_1"/>
    <property type="match status" value="1"/>
</dbReference>
<gene>
    <name evidence="1" type="primary">E1</name>
</gene>
<organismHost>
    <name type="scientific">Homo sapiens</name>
    <name type="common">Human</name>
    <dbReference type="NCBI Taxonomy" id="9606"/>
</organismHost>
<proteinExistence type="inferred from homology"/>